<accession>P20549</accession>
<sequence>MRDVRPEYWMGLDVAVFLFFATSDVDRHLTVFDHSQSFFTSDRGRVLTLSWGHAGQSSIHCVSISGF</sequence>
<organism>
    <name type="scientific">Vaccinia virus (strain Copenhagen)</name>
    <name type="common">VACV</name>
    <dbReference type="NCBI Taxonomy" id="10249"/>
    <lineage>
        <taxon>Viruses</taxon>
        <taxon>Varidnaviria</taxon>
        <taxon>Bamfordvirae</taxon>
        <taxon>Nucleocytoviricota</taxon>
        <taxon>Pokkesviricetes</taxon>
        <taxon>Chitovirales</taxon>
        <taxon>Poxviridae</taxon>
        <taxon>Chordopoxvirinae</taxon>
        <taxon>Orthopoxvirus</taxon>
        <taxon>Vaccinia virus</taxon>
    </lineage>
</organism>
<feature type="chain" id="PRO_0000099678" description="Uncharacterized 7.6 kDa protein">
    <location>
        <begin position="1"/>
        <end position="67"/>
    </location>
</feature>
<keyword id="KW-1185">Reference proteome</keyword>
<dbReference type="EMBL" id="M35027">
    <property type="protein sequence ID" value="AAA48231.1"/>
    <property type="molecule type" value="Genomic_DNA"/>
</dbReference>
<dbReference type="EMBL" id="M35027">
    <property type="protein sequence ID" value="AAA47971.1"/>
    <property type="molecule type" value="Genomic_DNA"/>
</dbReference>
<dbReference type="PIR" id="A33172">
    <property type="entry name" value="A33172"/>
</dbReference>
<dbReference type="Proteomes" id="UP000008269">
    <property type="component" value="Segment"/>
</dbReference>
<name>YVBI_VACCC</name>
<gene>
    <name type="ORF">B ORF I</name>
</gene>
<gene>
    <name type="ORF">C ORF H</name>
</gene>
<protein>
    <recommendedName>
        <fullName>Uncharacterized 7.6 kDa protein</fullName>
    </recommendedName>
</protein>
<proteinExistence type="predicted"/>
<organismHost>
    <name type="scientific">Homo sapiens</name>
    <name type="common">Human</name>
    <dbReference type="NCBI Taxonomy" id="9606"/>
</organismHost>
<reference key="1">
    <citation type="journal article" date="1990" name="Virology">
        <title>The complete DNA sequence of vaccinia virus.</title>
        <authorList>
            <person name="Goebel S.J."/>
            <person name="Johnson G.P."/>
            <person name="Perkus M.E."/>
            <person name="Davis S.W."/>
            <person name="Winslow J.P."/>
            <person name="Paoletti E."/>
        </authorList>
    </citation>
    <scope>NUCLEOTIDE SEQUENCE [LARGE SCALE GENOMIC DNA]</scope>
</reference>
<reference key="2">
    <citation type="journal article" date="1990" name="Virology">
        <title>Appendix to 'The complete DNA sequence of vaccinia virus'.</title>
        <authorList>
            <person name="Goebel S.J."/>
            <person name="Johnson G.P."/>
            <person name="Perkus M.E."/>
            <person name="Davis S.W."/>
            <person name="Winslow J.P."/>
            <person name="Paoletti E."/>
        </authorList>
    </citation>
    <scope>COMPLETE GENOME</scope>
</reference>